<gene>
    <name evidence="1" type="primary">rpsQ</name>
    <name type="ordered locus">Dgeo_1858</name>
</gene>
<organism>
    <name type="scientific">Deinococcus geothermalis (strain DSM 11300 / CIP 105573 / AG-3a)</name>
    <dbReference type="NCBI Taxonomy" id="319795"/>
    <lineage>
        <taxon>Bacteria</taxon>
        <taxon>Thermotogati</taxon>
        <taxon>Deinococcota</taxon>
        <taxon>Deinococci</taxon>
        <taxon>Deinococcales</taxon>
        <taxon>Deinococcaceae</taxon>
        <taxon>Deinococcus</taxon>
    </lineage>
</organism>
<protein>
    <recommendedName>
        <fullName evidence="1">Small ribosomal subunit protein uS17</fullName>
    </recommendedName>
    <alternativeName>
        <fullName evidence="2">30S ribosomal protein S17</fullName>
    </alternativeName>
</protein>
<comment type="function">
    <text evidence="1">One of the primary rRNA binding proteins, it binds specifically to the 5'-end of 16S ribosomal RNA.</text>
</comment>
<comment type="subunit">
    <text evidence="1">Part of the 30S ribosomal subunit.</text>
</comment>
<comment type="similarity">
    <text evidence="1">Belongs to the universal ribosomal protein uS17 family.</text>
</comment>
<evidence type="ECO:0000255" key="1">
    <source>
        <dbReference type="HAMAP-Rule" id="MF_01345"/>
    </source>
</evidence>
<evidence type="ECO:0000305" key="2"/>
<feature type="chain" id="PRO_0000255671" description="Small ribosomal subunit protein uS17">
    <location>
        <begin position="1"/>
        <end position="94"/>
    </location>
</feature>
<reference key="1">
    <citation type="submission" date="2006-04" db="EMBL/GenBank/DDBJ databases">
        <title>Complete sequence of chromosome of Deinococcus geothermalis DSM 11300.</title>
        <authorList>
            <person name="Copeland A."/>
            <person name="Lucas S."/>
            <person name="Lapidus A."/>
            <person name="Barry K."/>
            <person name="Detter J.C."/>
            <person name="Glavina del Rio T."/>
            <person name="Hammon N."/>
            <person name="Israni S."/>
            <person name="Dalin E."/>
            <person name="Tice H."/>
            <person name="Pitluck S."/>
            <person name="Brettin T."/>
            <person name="Bruce D."/>
            <person name="Han C."/>
            <person name="Tapia R."/>
            <person name="Saunders E."/>
            <person name="Gilna P."/>
            <person name="Schmutz J."/>
            <person name="Larimer F."/>
            <person name="Land M."/>
            <person name="Hauser L."/>
            <person name="Kyrpides N."/>
            <person name="Kim E."/>
            <person name="Daly M.J."/>
            <person name="Fredrickson J.K."/>
            <person name="Makarova K.S."/>
            <person name="Gaidamakova E.K."/>
            <person name="Zhai M."/>
            <person name="Richardson P."/>
        </authorList>
    </citation>
    <scope>NUCLEOTIDE SEQUENCE [LARGE SCALE GENOMIC DNA]</scope>
    <source>
        <strain>DSM 11300 / CIP 105573 / AG-3a</strain>
    </source>
</reference>
<name>RS17_DEIGD</name>
<proteinExistence type="inferred from homology"/>
<accession>Q1IX81</accession>
<dbReference type="EMBL" id="CP000359">
    <property type="protein sequence ID" value="ABF46153.1"/>
    <property type="molecule type" value="Genomic_DNA"/>
</dbReference>
<dbReference type="RefSeq" id="WP_011530983.1">
    <property type="nucleotide sequence ID" value="NC_008025.1"/>
</dbReference>
<dbReference type="SMR" id="Q1IX81"/>
<dbReference type="STRING" id="319795.Dgeo_1858"/>
<dbReference type="KEGG" id="dge:Dgeo_1858"/>
<dbReference type="eggNOG" id="COG0186">
    <property type="taxonomic scope" value="Bacteria"/>
</dbReference>
<dbReference type="HOGENOM" id="CLU_073626_1_2_0"/>
<dbReference type="Proteomes" id="UP000002431">
    <property type="component" value="Chromosome"/>
</dbReference>
<dbReference type="GO" id="GO:0022627">
    <property type="term" value="C:cytosolic small ribosomal subunit"/>
    <property type="evidence" value="ECO:0007669"/>
    <property type="project" value="TreeGrafter"/>
</dbReference>
<dbReference type="GO" id="GO:0019843">
    <property type="term" value="F:rRNA binding"/>
    <property type="evidence" value="ECO:0007669"/>
    <property type="project" value="UniProtKB-UniRule"/>
</dbReference>
<dbReference type="GO" id="GO:0003735">
    <property type="term" value="F:structural constituent of ribosome"/>
    <property type="evidence" value="ECO:0007669"/>
    <property type="project" value="InterPro"/>
</dbReference>
<dbReference type="GO" id="GO:0006412">
    <property type="term" value="P:translation"/>
    <property type="evidence" value="ECO:0007669"/>
    <property type="project" value="UniProtKB-UniRule"/>
</dbReference>
<dbReference type="CDD" id="cd00364">
    <property type="entry name" value="Ribosomal_uS17"/>
    <property type="match status" value="1"/>
</dbReference>
<dbReference type="FunFam" id="2.40.50.140:FF:000311">
    <property type="entry name" value="30S ribosomal protein S17"/>
    <property type="match status" value="1"/>
</dbReference>
<dbReference type="Gene3D" id="2.40.50.140">
    <property type="entry name" value="Nucleic acid-binding proteins"/>
    <property type="match status" value="1"/>
</dbReference>
<dbReference type="HAMAP" id="MF_01345_B">
    <property type="entry name" value="Ribosomal_uS17_B"/>
    <property type="match status" value="1"/>
</dbReference>
<dbReference type="InterPro" id="IPR012340">
    <property type="entry name" value="NA-bd_OB-fold"/>
</dbReference>
<dbReference type="InterPro" id="IPR000266">
    <property type="entry name" value="Ribosomal_uS17"/>
</dbReference>
<dbReference type="InterPro" id="IPR019984">
    <property type="entry name" value="Ribosomal_uS17_bact/chlr"/>
</dbReference>
<dbReference type="NCBIfam" id="NF004123">
    <property type="entry name" value="PRK05610.1"/>
    <property type="match status" value="1"/>
</dbReference>
<dbReference type="NCBIfam" id="TIGR03635">
    <property type="entry name" value="uS17_bact"/>
    <property type="match status" value="1"/>
</dbReference>
<dbReference type="PANTHER" id="PTHR10744">
    <property type="entry name" value="40S RIBOSOMAL PROTEIN S11 FAMILY MEMBER"/>
    <property type="match status" value="1"/>
</dbReference>
<dbReference type="PANTHER" id="PTHR10744:SF1">
    <property type="entry name" value="SMALL RIBOSOMAL SUBUNIT PROTEIN US17M"/>
    <property type="match status" value="1"/>
</dbReference>
<dbReference type="Pfam" id="PF00366">
    <property type="entry name" value="Ribosomal_S17"/>
    <property type="match status" value="1"/>
</dbReference>
<dbReference type="PRINTS" id="PR00973">
    <property type="entry name" value="RIBOSOMALS17"/>
</dbReference>
<dbReference type="SUPFAM" id="SSF50249">
    <property type="entry name" value="Nucleic acid-binding proteins"/>
    <property type="match status" value="1"/>
</dbReference>
<keyword id="KW-0687">Ribonucleoprotein</keyword>
<keyword id="KW-0689">Ribosomal protein</keyword>
<keyword id="KW-0694">RNA-binding</keyword>
<keyword id="KW-0699">rRNA-binding</keyword>
<sequence length="94" mass="10704">MKKTFTGVVVSDKADKTVSVKVERRFMHPLYGKVVTRSKKYAAHDEQNEYRIGDRVEIIAVRPISKTKTWKVTRLIERPRGIETTAVETEGGNA</sequence>